<protein>
    <recommendedName>
        <fullName evidence="1">Gamma-glutamyl phosphate reductase</fullName>
        <shortName evidence="1">GPR</shortName>
        <ecNumber evidence="1">1.2.1.41</ecNumber>
    </recommendedName>
    <alternativeName>
        <fullName evidence="1">Glutamate-5-semialdehyde dehydrogenase</fullName>
    </alternativeName>
    <alternativeName>
        <fullName evidence="1">Glutamyl-gamma-semialdehyde dehydrogenase</fullName>
        <shortName evidence="1">GSA dehydrogenase</shortName>
    </alternativeName>
</protein>
<proteinExistence type="inferred from homology"/>
<organism>
    <name type="scientific">Mycobacterium bovis (strain BCG / Tokyo 172 / ATCC 35737 / TMC 1019)</name>
    <dbReference type="NCBI Taxonomy" id="561275"/>
    <lineage>
        <taxon>Bacteria</taxon>
        <taxon>Bacillati</taxon>
        <taxon>Actinomycetota</taxon>
        <taxon>Actinomycetes</taxon>
        <taxon>Mycobacteriales</taxon>
        <taxon>Mycobacteriaceae</taxon>
        <taxon>Mycobacterium</taxon>
        <taxon>Mycobacterium tuberculosis complex</taxon>
    </lineage>
</organism>
<feature type="chain" id="PRO_1000193626" description="Gamma-glutamyl phosphate reductase">
    <location>
        <begin position="1"/>
        <end position="415"/>
    </location>
</feature>
<evidence type="ECO:0000255" key="1">
    <source>
        <dbReference type="HAMAP-Rule" id="MF_00412"/>
    </source>
</evidence>
<keyword id="KW-0028">Amino-acid biosynthesis</keyword>
<keyword id="KW-0963">Cytoplasm</keyword>
<keyword id="KW-0521">NADP</keyword>
<keyword id="KW-0560">Oxidoreductase</keyword>
<keyword id="KW-0641">Proline biosynthesis</keyword>
<gene>
    <name evidence="1" type="primary">proA</name>
    <name type="ordered locus">JTY_2438</name>
</gene>
<sequence length="415" mass="43745">MTVPAPSQLDLRQEVHDAARRARVAARRLASLPTTVKDRALHAAADELLAHRDQILAANAEDLNAAREADTPAAMLDRLSLNPQRVDGIAAGLRQVAGLRDPVGEVLRGYTLPNGLQLRQQRVPLGVVGMIYEGRPNVTVDAFGLTLKSGNAALLRGSSSAAKSNEALVAVLRTALVGLELPADAVQLLSAADRATVTHLIQARGLVDVVIPRGGAGLIEAVVRDAQVPTIETGVGNCHVYVHQAADLDVAERILLNSKTRRPSVCNAAETLLVDAAIAETALPRLLAALQHAGVTVHLDPDEADLRREYLSLDIAVAVVDGVDAAIAHINEYGTGHTEAIVTTNLDAAQRFTEQIDAAAVMVNASTAFTDGEQFGFGAEIGISTQKLHARGPMGLPELTSTKWIAWGAGHTRPA</sequence>
<reference key="1">
    <citation type="journal article" date="2009" name="Vaccine">
        <title>Whole genome sequence analysis of Mycobacterium bovis bacillus Calmette-Guerin (BCG) Tokyo 172: a comparative study of BCG vaccine substrains.</title>
        <authorList>
            <person name="Seki M."/>
            <person name="Honda I."/>
            <person name="Fujita I."/>
            <person name="Yano I."/>
            <person name="Yamamoto S."/>
            <person name="Koyama A."/>
        </authorList>
    </citation>
    <scope>NUCLEOTIDE SEQUENCE [LARGE SCALE GENOMIC DNA]</scope>
    <source>
        <strain>BCG / Tokyo 172 / ATCC 35737 / TMC 1019</strain>
    </source>
</reference>
<dbReference type="EC" id="1.2.1.41" evidence="1"/>
<dbReference type="EMBL" id="AP010918">
    <property type="protein sequence ID" value="BAH26722.1"/>
    <property type="molecule type" value="Genomic_DNA"/>
</dbReference>
<dbReference type="RefSeq" id="WP_003412516.1">
    <property type="nucleotide sequence ID" value="NZ_CP014566.1"/>
</dbReference>
<dbReference type="SMR" id="C1AQZ3"/>
<dbReference type="KEGG" id="mbt:JTY_2438"/>
<dbReference type="HOGENOM" id="CLU_030231_0_0_11"/>
<dbReference type="UniPathway" id="UPA00098">
    <property type="reaction ID" value="UER00360"/>
</dbReference>
<dbReference type="GO" id="GO:0005737">
    <property type="term" value="C:cytoplasm"/>
    <property type="evidence" value="ECO:0007669"/>
    <property type="project" value="UniProtKB-SubCell"/>
</dbReference>
<dbReference type="GO" id="GO:0004350">
    <property type="term" value="F:glutamate-5-semialdehyde dehydrogenase activity"/>
    <property type="evidence" value="ECO:0007669"/>
    <property type="project" value="UniProtKB-UniRule"/>
</dbReference>
<dbReference type="GO" id="GO:0050661">
    <property type="term" value="F:NADP binding"/>
    <property type="evidence" value="ECO:0007669"/>
    <property type="project" value="InterPro"/>
</dbReference>
<dbReference type="GO" id="GO:0055129">
    <property type="term" value="P:L-proline biosynthetic process"/>
    <property type="evidence" value="ECO:0007669"/>
    <property type="project" value="UniProtKB-UniRule"/>
</dbReference>
<dbReference type="CDD" id="cd07079">
    <property type="entry name" value="ALDH_F18-19_ProA-GPR"/>
    <property type="match status" value="1"/>
</dbReference>
<dbReference type="FunFam" id="3.40.309.10:FF:000006">
    <property type="entry name" value="Gamma-glutamyl phosphate reductase"/>
    <property type="match status" value="1"/>
</dbReference>
<dbReference type="Gene3D" id="3.40.605.10">
    <property type="entry name" value="Aldehyde Dehydrogenase, Chain A, domain 1"/>
    <property type="match status" value="1"/>
</dbReference>
<dbReference type="Gene3D" id="3.40.309.10">
    <property type="entry name" value="Aldehyde Dehydrogenase, Chain A, domain 2"/>
    <property type="match status" value="1"/>
</dbReference>
<dbReference type="HAMAP" id="MF_00412">
    <property type="entry name" value="ProA"/>
    <property type="match status" value="1"/>
</dbReference>
<dbReference type="InterPro" id="IPR016161">
    <property type="entry name" value="Ald_DH/histidinol_DH"/>
</dbReference>
<dbReference type="InterPro" id="IPR016163">
    <property type="entry name" value="Ald_DH_C"/>
</dbReference>
<dbReference type="InterPro" id="IPR016162">
    <property type="entry name" value="Ald_DH_N"/>
</dbReference>
<dbReference type="InterPro" id="IPR015590">
    <property type="entry name" value="Aldehyde_DH_dom"/>
</dbReference>
<dbReference type="InterPro" id="IPR020593">
    <property type="entry name" value="G-glutamylP_reductase_CS"/>
</dbReference>
<dbReference type="InterPro" id="IPR012134">
    <property type="entry name" value="Glu-5-SA_DH"/>
</dbReference>
<dbReference type="InterPro" id="IPR000965">
    <property type="entry name" value="GPR_dom"/>
</dbReference>
<dbReference type="NCBIfam" id="NF001221">
    <property type="entry name" value="PRK00197.1"/>
    <property type="match status" value="1"/>
</dbReference>
<dbReference type="NCBIfam" id="TIGR00407">
    <property type="entry name" value="proA"/>
    <property type="match status" value="1"/>
</dbReference>
<dbReference type="PANTHER" id="PTHR11063:SF8">
    <property type="entry name" value="DELTA-1-PYRROLINE-5-CARBOXYLATE SYNTHASE"/>
    <property type="match status" value="1"/>
</dbReference>
<dbReference type="PANTHER" id="PTHR11063">
    <property type="entry name" value="GLUTAMATE SEMIALDEHYDE DEHYDROGENASE"/>
    <property type="match status" value="1"/>
</dbReference>
<dbReference type="Pfam" id="PF00171">
    <property type="entry name" value="Aldedh"/>
    <property type="match status" value="2"/>
</dbReference>
<dbReference type="PIRSF" id="PIRSF000151">
    <property type="entry name" value="GPR"/>
    <property type="match status" value="1"/>
</dbReference>
<dbReference type="SUPFAM" id="SSF53720">
    <property type="entry name" value="ALDH-like"/>
    <property type="match status" value="1"/>
</dbReference>
<dbReference type="PROSITE" id="PS01223">
    <property type="entry name" value="PROA"/>
    <property type="match status" value="1"/>
</dbReference>
<accession>C1AQZ3</accession>
<name>PROA_MYCBT</name>
<comment type="function">
    <text evidence="1">Catalyzes the NADPH-dependent reduction of L-glutamate 5-phosphate into L-glutamate 5-semialdehyde and phosphate. The product spontaneously undergoes cyclization to form 1-pyrroline-5-carboxylate.</text>
</comment>
<comment type="catalytic activity">
    <reaction evidence="1">
        <text>L-glutamate 5-semialdehyde + phosphate + NADP(+) = L-glutamyl 5-phosphate + NADPH + H(+)</text>
        <dbReference type="Rhea" id="RHEA:19541"/>
        <dbReference type="ChEBI" id="CHEBI:15378"/>
        <dbReference type="ChEBI" id="CHEBI:43474"/>
        <dbReference type="ChEBI" id="CHEBI:57783"/>
        <dbReference type="ChEBI" id="CHEBI:58066"/>
        <dbReference type="ChEBI" id="CHEBI:58274"/>
        <dbReference type="ChEBI" id="CHEBI:58349"/>
        <dbReference type="EC" id="1.2.1.41"/>
    </reaction>
</comment>
<comment type="pathway">
    <text evidence="1">Amino-acid biosynthesis; L-proline biosynthesis; L-glutamate 5-semialdehyde from L-glutamate: step 2/2.</text>
</comment>
<comment type="subcellular location">
    <subcellularLocation>
        <location evidence="1">Cytoplasm</location>
    </subcellularLocation>
</comment>
<comment type="similarity">
    <text evidence="1">Belongs to the gamma-glutamyl phosphate reductase family.</text>
</comment>